<dbReference type="EMBL" id="V00004">
    <property type="protein sequence ID" value="CAA23407.1"/>
    <property type="molecule type" value="Genomic_DNA"/>
</dbReference>
<dbReference type="EMBL" id="M55003">
    <property type="protein sequence ID" value="AAA42499.1"/>
    <property type="molecule type" value="Genomic_DNA"/>
</dbReference>
<dbReference type="EMBL" id="X73487">
    <property type="protein sequence ID" value="CAA51879.1"/>
    <property type="molecule type" value="Genomic_DNA"/>
</dbReference>
<dbReference type="PIR" id="A03812">
    <property type="entry name" value="ERAD24"/>
</dbReference>
<dbReference type="RefSeq" id="NP_040912.1">
    <property type="nucleotide sequence ID" value="NC_001460.1"/>
</dbReference>
<dbReference type="SMR" id="P04491"/>
<dbReference type="IntAct" id="P04491">
    <property type="interactions" value="1"/>
</dbReference>
<dbReference type="DNASU" id="1460854"/>
<dbReference type="GeneID" id="1460854"/>
<dbReference type="KEGG" id="vg:1460854"/>
<dbReference type="Proteomes" id="UP000004993">
    <property type="component" value="Genome"/>
</dbReference>
<dbReference type="GO" id="GO:0030430">
    <property type="term" value="C:host cell cytoplasm"/>
    <property type="evidence" value="ECO:0000250"/>
    <property type="project" value="UniProtKB"/>
</dbReference>
<dbReference type="GO" id="GO:0042025">
    <property type="term" value="C:host cell nucleus"/>
    <property type="evidence" value="ECO:0007669"/>
    <property type="project" value="UniProtKB-SubCell"/>
</dbReference>
<dbReference type="GO" id="GO:1990756">
    <property type="term" value="F:ubiquitin-like ligase-substrate adaptor activity"/>
    <property type="evidence" value="ECO:0000250"/>
    <property type="project" value="UniProtKB"/>
</dbReference>
<dbReference type="GO" id="GO:0052150">
    <property type="term" value="P:symbiont-mediated perturbation of host apoptosis"/>
    <property type="evidence" value="ECO:0007669"/>
    <property type="project" value="UniProtKB-KW"/>
</dbReference>
<dbReference type="GO" id="GO:0039648">
    <property type="term" value="P:symbiont-mediated perturbation of host ubiquitin-like protein modification"/>
    <property type="evidence" value="ECO:0000250"/>
    <property type="project" value="UniProtKB"/>
</dbReference>
<dbReference type="InterPro" id="IPR006717">
    <property type="entry name" value="Adeno_E1B_55K_N"/>
</dbReference>
<dbReference type="InterPro" id="IPR002612">
    <property type="entry name" value="Adeno_E1B_55kDa"/>
</dbReference>
<dbReference type="InterPro" id="IPR011050">
    <property type="entry name" value="Pectin_lyase_fold/virulence"/>
</dbReference>
<dbReference type="Pfam" id="PF01696">
    <property type="entry name" value="Adeno_E1B_55K"/>
    <property type="match status" value="1"/>
</dbReference>
<dbReference type="Pfam" id="PF04623">
    <property type="entry name" value="Adeno_E1B_55K_N"/>
    <property type="match status" value="1"/>
</dbReference>
<dbReference type="SUPFAM" id="SSF51126">
    <property type="entry name" value="Pectin lyase-like"/>
    <property type="match status" value="1"/>
</dbReference>
<feature type="chain" id="PRO_0000221727" description="E1B 55 kDa protein">
    <location>
        <begin position="1"/>
        <end position="482"/>
    </location>
</feature>
<feature type="region of interest" description="Disordered" evidence="3">
    <location>
        <begin position="73"/>
        <end position="94"/>
    </location>
</feature>
<feature type="compositionally biased region" description="Basic and acidic residues" evidence="3">
    <location>
        <begin position="83"/>
        <end position="94"/>
    </location>
</feature>
<feature type="modified residue" description="Phosphoserine" evidence="1">
    <location>
        <position position="476"/>
    </location>
</feature>
<feature type="modified residue" description="Phosphoserine" evidence="1">
    <location>
        <position position="477"/>
    </location>
</feature>
<feature type="sequence conflict" description="In Ref. 3; AAA42499." evidence="4" ref="3">
    <original>DS</original>
    <variation>ER</variation>
    <location>
        <begin position="75"/>
        <end position="76"/>
    </location>
</feature>
<feature type="sequence conflict" description="In Ref. 3; AAA42499." evidence="4" ref="3">
    <original>I</original>
    <variation>E</variation>
    <location>
        <position position="191"/>
    </location>
</feature>
<feature type="sequence conflict" description="In Ref. 3; AAA42499." evidence="4" ref="3">
    <original>LIV</original>
    <variation>ILN</variation>
    <location>
        <begin position="299"/>
        <end position="301"/>
    </location>
</feature>
<accession>P04491</accession>
<accession>Q64837</accession>
<name>E1B55_ADE12</name>
<keyword id="KW-0244">Early protein</keyword>
<keyword id="KW-1035">Host cytoplasm</keyword>
<keyword id="KW-1048">Host nucleus</keyword>
<keyword id="KW-0945">Host-virus interaction</keyword>
<keyword id="KW-1119">Modulation of host cell apoptosis by virus</keyword>
<keyword id="KW-0597">Phosphoprotein</keyword>
<keyword id="KW-1185">Reference proteome</keyword>
<sequence length="482" mass="53936">MEREIPPELGLHAGLHVNAAVEGMAEEEGLHLLAGAAFDHAAAADVARGEGGGAEPCGGGEVNMEQQVQEGHVLDSGEGPSCADDRDKQEKKESLKEAAVLSRLTVNLMSRPRLETVYWQELQDEFQRGDMHLQYKYSFEQLKTHWLEPWEDMECAIKAFAKLALRPDCSYRITKTVTITSCAYIIGNGAIVEVDTSDRVAFRCRMQGMGPGVVGLDGITFINVRFAGDKFKGIMFEANTCLVLHGVYFLNFSNICVESWNKVSARGCTFYGCWKGLVGRPKSKLSVKKCLFEKCVLALIVEGDAHIRHNAASENACFVLLKGMAILKHNMVCGVSDQTMRRFVTCADGNCHTLKTVHIVSHSRHCWPVCDHNMFMRCTIHLGLRRGMFRPSQCNFSHSNIMLEPEVFSRVCLNGVFDLSVELCKVIRYNDDTRHRCRQCECGSSHLELRPIVLNVTEELRSDHLTLSCLRTDYESSDEDDN</sequence>
<evidence type="ECO:0000250" key="1">
    <source>
        <dbReference type="UniProtKB" id="P03243"/>
    </source>
</evidence>
<evidence type="ECO:0000250" key="2">
    <source>
        <dbReference type="UniProtKB" id="P03244"/>
    </source>
</evidence>
<evidence type="ECO:0000256" key="3">
    <source>
        <dbReference type="SAM" id="MobiDB-lite"/>
    </source>
</evidence>
<evidence type="ECO:0000305" key="4"/>
<organismHost>
    <name type="scientific">Homo sapiens</name>
    <name type="common">Human</name>
    <dbReference type="NCBI Taxonomy" id="9606"/>
</organismHost>
<reference key="1">
    <citation type="journal article" date="1981" name="Nucleic Acids Res.">
        <title>Nucleotide sequence of the transforming early region E1b of adenovirus type 12 DNA: structure and gene organization, and comparison with those of adenovirus type 5 DNA.</title>
        <authorList>
            <person name="Kimura T."/>
            <person name="Sawada Y."/>
            <person name="Shinawawa M."/>
            <person name="Shimizu Y."/>
            <person name="Shiroki K."/>
            <person name="Shimojo H."/>
            <person name="Sugisaki H."/>
            <person name="Takanami M."/>
            <person name="Uemizu Y."/>
            <person name="Fujinaga K."/>
        </authorList>
    </citation>
    <scope>NUCLEOTIDE SEQUENCE [GENOMIC DNA]</scope>
</reference>
<reference key="2">
    <citation type="journal article" date="1981" name="Cell">
        <title>The 2.2 kb E1b mRNA of human Ad12 and Ad5 codes for two tumor antigens starting at different AUG triplets.</title>
        <authorList>
            <person name="Bos J.L."/>
            <person name="Polder L.J."/>
            <person name="Bernards R."/>
            <person name="Schrier P.I."/>
            <person name="van den Elsen P.J."/>
            <person name="van der Eb A.J."/>
            <person name="van Ormondt H."/>
        </authorList>
    </citation>
    <scope>NUCLEOTIDE SEQUENCE [GENOMIC DNA]</scope>
</reference>
<reference key="3">
    <citation type="journal article" date="1983" name="Sapporo Igaku Zasshi">
        <title>Structure and sequence analysis of the transforming region E1B of human adenovirus type 12.</title>
        <authorList>
            <person name="Kimura T."/>
        </authorList>
    </citation>
    <scope>NUCLEOTIDE SEQUENCE [GENOMIC DNA]</scope>
</reference>
<reference key="4">
    <citation type="journal article" date="1994" name="J. Virol.">
        <title>Nucleotide sequence of human adenovirus type 12 DNA: comparative functional analysis.</title>
        <authorList>
            <person name="Sprengel J."/>
            <person name="Schmitz B."/>
            <person name="Heuss-Neitzel D."/>
            <person name="Zock C."/>
            <person name="Doerfler W."/>
        </authorList>
    </citation>
    <scope>NUCLEOTIDE SEQUENCE [LARGE SCALE GENOMIC DNA]</scope>
</reference>
<comment type="function">
    <text evidence="1">Plays a major role to prevent cellular inhibition of viral genome replication. Assembles an SCF-like E3 ubiquitin ligase complex based on the cellular proteins ELOB, ELOC, CUL5 and RBX1, in cooperation with viral E4orf6. This viral RING-type ligase ubiquitinates cellular substrates and targets them to proteasomal degradation: TP53/p53, LIG4, MRE11-RAD50-NBS1 (MRN) complex, ITGA3, DAXX and BLM. E1B-55K probably acts as the substrate-specific adapter of the SCF-like E3 ubiquitin ligase complex. Degradation of host TP53/p53 activity is essential for preventing E1A-induced TP53 accumulation that would otherwise lead to cell apoptosis and growth arrest. E1B-55K also inactivates TP53 transcription-factor activity by binding its transactivation domain. E1B-55K also functions as a SUMO1 E3 ligase for TP53 which causes the latter to be sequestered in promyelocytic leukemia (PML) nuclear bodies thereby contributing to maximal inhibition of TP53 function.</text>
</comment>
<comment type="subunit">
    <text evidence="1 2">Interacts with host PML-4 and PML-5; this interaction promotes efficient subnuclear targeting of E1B-55K to PML nuclear bodies. Interacts with E4-ORF3 protein (By similarity). Interacts with E4-ORF6 protein (By similarity).</text>
</comment>
<comment type="subcellular location">
    <subcellularLocation>
        <location evidence="1">Host nucleus</location>
    </subcellularLocation>
    <subcellularLocation>
        <location evidence="1">Host cytoplasm</location>
    </subcellularLocation>
    <text evidence="1">Colocalizes with host TP53 to host PML nuclear bodies. PML localization of E1B-55K is necessary for E1B-55K-dependent SUMOylation of TP53.</text>
</comment>
<comment type="domain">
    <text evidence="1">Contains a PML interaction motif that allows the subnuclear PML localization.</text>
</comment>
<comment type="similarity">
    <text evidence="4">Belongs to the adenoviridae E1B 55 kDa protein family.</text>
</comment>
<organism>
    <name type="scientific">Human adenovirus A serotype 12</name>
    <name type="common">HAdV-12</name>
    <name type="synonym">Human adenovirus 12</name>
    <dbReference type="NCBI Taxonomy" id="28282"/>
    <lineage>
        <taxon>Viruses</taxon>
        <taxon>Varidnaviria</taxon>
        <taxon>Bamfordvirae</taxon>
        <taxon>Preplasmiviricota</taxon>
        <taxon>Tectiliviricetes</taxon>
        <taxon>Rowavirales</taxon>
        <taxon>Adenoviridae</taxon>
        <taxon>Mastadenovirus</taxon>
        <taxon>Human mastadenovirus A</taxon>
    </lineage>
</organism>
<protein>
    <recommendedName>
        <fullName>E1B 55 kDa protein</fullName>
        <shortName>E1B-55K</shortName>
    </recommendedName>
    <alternativeName>
        <fullName>E1B protein, large T-antigen</fullName>
    </alternativeName>
    <alternativeName>
        <fullName>E1B-495R</fullName>
    </alternativeName>
</protein>
<proteinExistence type="inferred from homology"/>